<protein>
    <recommendedName>
        <fullName>Apolipoprotein C-I, acidic form</fullName>
        <shortName>Apo-CIA</shortName>
        <shortName>ApoC-IA</shortName>
    </recommendedName>
    <alternativeName>
        <fullName>Apolipoprotein C1A</fullName>
    </alternativeName>
    <component>
        <recommendedName>
            <fullName>Truncated apolipoprotein C-I, acidic form</fullName>
            <shortName>Apo-CIA'</shortName>
            <shortName>ApoC-IA'</shortName>
        </recommendedName>
    </component>
</protein>
<organism>
    <name type="scientific">Colobus guereza</name>
    <name type="common">Mantled guereza</name>
    <name type="synonym">Eastern black-and-white colobus monkey</name>
    <dbReference type="NCBI Taxonomy" id="33548"/>
    <lineage>
        <taxon>Eukaryota</taxon>
        <taxon>Metazoa</taxon>
        <taxon>Chordata</taxon>
        <taxon>Craniata</taxon>
        <taxon>Vertebrata</taxon>
        <taxon>Euteleostomi</taxon>
        <taxon>Mammalia</taxon>
        <taxon>Eutheria</taxon>
        <taxon>Euarchontoglires</taxon>
        <taxon>Primates</taxon>
        <taxon>Haplorrhini</taxon>
        <taxon>Catarrhini</taxon>
        <taxon>Cercopithecidae</taxon>
        <taxon>Colobinae</taxon>
        <taxon>Colobus</taxon>
    </lineage>
</organism>
<dbReference type="EMBL" id="AC148222">
    <property type="status" value="NOT_ANNOTATED_CDS"/>
    <property type="molecule type" value="Genomic_DNA"/>
</dbReference>
<dbReference type="SMR" id="P0DKU7"/>
<dbReference type="GO" id="GO:0034364">
    <property type="term" value="C:high-density lipoprotein particle"/>
    <property type="evidence" value="ECO:0007669"/>
    <property type="project" value="TreeGrafter"/>
</dbReference>
<dbReference type="GO" id="GO:0034361">
    <property type="term" value="C:very-low-density lipoprotein particle"/>
    <property type="evidence" value="ECO:0007669"/>
    <property type="project" value="TreeGrafter"/>
</dbReference>
<dbReference type="GO" id="GO:0005504">
    <property type="term" value="F:fatty acid binding"/>
    <property type="evidence" value="ECO:0007669"/>
    <property type="project" value="TreeGrafter"/>
</dbReference>
<dbReference type="GO" id="GO:0004859">
    <property type="term" value="F:phospholipase inhibitor activity"/>
    <property type="evidence" value="ECO:0007669"/>
    <property type="project" value="TreeGrafter"/>
</dbReference>
<dbReference type="GO" id="GO:0006869">
    <property type="term" value="P:lipid transport"/>
    <property type="evidence" value="ECO:0007669"/>
    <property type="project" value="UniProtKB-KW"/>
</dbReference>
<dbReference type="GO" id="GO:0042157">
    <property type="term" value="P:lipoprotein metabolic process"/>
    <property type="evidence" value="ECO:0007669"/>
    <property type="project" value="InterPro"/>
</dbReference>
<dbReference type="GO" id="GO:0032375">
    <property type="term" value="P:negative regulation of cholesterol transport"/>
    <property type="evidence" value="ECO:0007669"/>
    <property type="project" value="TreeGrafter"/>
</dbReference>
<dbReference type="GO" id="GO:0050995">
    <property type="term" value="P:negative regulation of lipid catabolic process"/>
    <property type="evidence" value="ECO:0007669"/>
    <property type="project" value="TreeGrafter"/>
</dbReference>
<dbReference type="GO" id="GO:0010916">
    <property type="term" value="P:negative regulation of very-low-density lipoprotein particle clearance"/>
    <property type="evidence" value="ECO:0007669"/>
    <property type="project" value="TreeGrafter"/>
</dbReference>
<dbReference type="GO" id="GO:0006641">
    <property type="term" value="P:triglyceride metabolic process"/>
    <property type="evidence" value="ECO:0007669"/>
    <property type="project" value="TreeGrafter"/>
</dbReference>
<dbReference type="GO" id="GO:0034447">
    <property type="term" value="P:very-low-density lipoprotein particle clearance"/>
    <property type="evidence" value="ECO:0007669"/>
    <property type="project" value="TreeGrafter"/>
</dbReference>
<dbReference type="Gene3D" id="4.10.260.30">
    <property type="entry name" value="Apolipoprotein C-I"/>
    <property type="match status" value="1"/>
</dbReference>
<dbReference type="InterPro" id="IPR043081">
    <property type="entry name" value="ApoC-1_sf"/>
</dbReference>
<dbReference type="InterPro" id="IPR006781">
    <property type="entry name" value="ApoC-I"/>
</dbReference>
<dbReference type="PANTHER" id="PTHR16565">
    <property type="entry name" value="APOLIPOPROTEIN C-I"/>
    <property type="match status" value="1"/>
</dbReference>
<dbReference type="PANTHER" id="PTHR16565:SF3">
    <property type="entry name" value="APOLIPOPROTEIN C-I, ACIDIC FORM"/>
    <property type="match status" value="1"/>
</dbReference>
<dbReference type="Pfam" id="PF04691">
    <property type="entry name" value="ApoC-I"/>
    <property type="match status" value="1"/>
</dbReference>
<reference key="1">
    <citation type="submission" date="2006-07" db="EMBL/GenBank/DDBJ databases">
        <authorList>
            <person name="Cheng J.-F."/>
            <person name="Hamilton M."/>
            <person name="Peng Y."/>
            <person name="Hosseini R."/>
            <person name="Peng Z."/>
            <person name="Malinov I."/>
            <person name="Rubin E.M."/>
        </authorList>
    </citation>
    <scope>NUCLEOTIDE SEQUENCE [LARGE SCALE GENOMIC DNA]</scope>
</reference>
<reference key="2">
    <citation type="unpublished observations" date="2012-11">
        <authorList>
            <person name="Puppione D.L."/>
        </authorList>
    </citation>
    <scope>IDENTIFICATION</scope>
</reference>
<reference key="3">
    <citation type="journal article" date="2013" name="Front. Biol.">
        <title>Proteogenomic Review of the Changes in Primate apoC-I during Evolution.</title>
        <authorList>
            <person name="Puppione D."/>
            <person name="Whitelegge J.P."/>
        </authorList>
    </citation>
    <scope>REVIEW</scope>
</reference>
<reference key="4">
    <citation type="journal article" date="2014" name="Comp. Biochem. Physiol.">
        <title>Higher primates, but not New World monkeys, have a duplicate set of enhancers flanking their apoC-I genes.</title>
        <authorList>
            <person name="Puppione D.L."/>
        </authorList>
    </citation>
    <scope>GENE DUPLICATION</scope>
</reference>
<gene>
    <name type="primary">APOC1A</name>
</gene>
<accession>P0DKU7</accession>
<comment type="subcellular location">
    <subcellularLocation>
        <location evidence="1">Secreted</location>
    </subcellularLocation>
</comment>
<comment type="miscellaneous">
    <text evidence="4">Apolipoprotein C-I is present in acidic (APOC1A) and basic (APOC1B) forms in P.paniscus, P.abelii and P.troglodytes and perhaps also in baboons and macaques. The two genes for ApoC-I arose through a duplication process that occurred after the divergence of New World monkeys from the human lineage. In human, the acidic form has become a pseudogene sometime between the divergence of bonobos and chimpanzees from the human lineage and the appearance of the Denisovans. Pseudogenization resulted when the codon for the penultimate amino acid in the signal sequence was changed to a stop codon.</text>
</comment>
<comment type="similarity">
    <text evidence="5">Belongs to the apolipoprotein C1 family.</text>
</comment>
<keyword id="KW-0445">Lipid transport</keyword>
<keyword id="KW-0964">Secreted</keyword>
<keyword id="KW-0732">Signal</keyword>
<keyword id="KW-0813">Transport</keyword>
<evidence type="ECO:0000250" key="1">
    <source>
        <dbReference type="UniProtKB" id="P02654"/>
    </source>
</evidence>
<evidence type="ECO:0000250" key="2">
    <source>
        <dbReference type="UniProtKB" id="P86336"/>
    </source>
</evidence>
<evidence type="ECO:0000255" key="3"/>
<evidence type="ECO:0000303" key="4">
    <source>
    </source>
</evidence>
<evidence type="ECO:0000305" key="5"/>
<sequence length="74" mass="8338">MRLFLSLPVLVVVLSMVLEGPTPAQGVLDVSNPFDVLEEFGKTLEDNVREFINLITQSELPAKTRDWFSEIFGK</sequence>
<feature type="signal peptide" evidence="3">
    <location>
        <begin position="1"/>
        <end position="26"/>
    </location>
</feature>
<feature type="chain" id="PRO_0000420899" description="Apolipoprotein C-I, acidic form">
    <location>
        <begin position="27"/>
        <end position="74"/>
    </location>
</feature>
<feature type="chain" id="PRO_0000420900" description="Truncated apolipoprotein C-I, acidic form" evidence="2">
    <location>
        <begin position="29"/>
        <end position="74"/>
    </location>
</feature>
<proteinExistence type="inferred from homology"/>
<name>APO1A_COLGU</name>